<feature type="chain" id="PRO_0000198009" description="Bis(5'-nucleosyl)-tetraphosphatase, symmetrical">
    <location>
        <begin position="1"/>
        <end position="282"/>
    </location>
</feature>
<feature type="sequence conflict" description="In Ref. 1; AAA79340." evidence="2" ref="1">
    <original>V</original>
    <variation>I</variation>
    <location>
        <position position="110"/>
    </location>
</feature>
<feature type="sequence conflict" description="In Ref. 1; AAA79340." evidence="2" ref="1">
    <original>S</original>
    <variation>R</variation>
    <location>
        <position position="168"/>
    </location>
</feature>
<feature type="sequence conflict" description="In Ref. 1; AAA79340." evidence="2" ref="1">
    <original>A</original>
    <variation>G</variation>
    <location>
        <position position="171"/>
    </location>
</feature>
<feature type="sequence conflict" description="In Ref. 1; AAA79340." evidence="2" ref="1">
    <original>Y</original>
    <variation>F</variation>
    <location>
        <position position="185"/>
    </location>
</feature>
<feature type="sequence conflict" description="In Ref. 1; AAA79340." evidence="2" ref="1">
    <original>A</original>
    <variation>E</variation>
    <location>
        <position position="198"/>
    </location>
</feature>
<feature type="sequence conflict" description="In Ref. 1; AAA79340." evidence="2" ref="1">
    <original>N</original>
    <variation>E</variation>
    <location>
        <position position="202"/>
    </location>
</feature>
<feature type="sequence conflict" description="In Ref. 1; AAA79340." evidence="2" ref="1">
    <original>SEA</original>
    <variation>AEE</variation>
    <location>
        <begin position="218"/>
        <end position="220"/>
    </location>
</feature>
<feature type="sequence conflict" description="In Ref. 1; AAA79340." evidence="2" ref="1">
    <original>E</original>
    <variation>T</variation>
    <location>
        <position position="252"/>
    </location>
</feature>
<feature type="sequence conflict" description="In Ref. 1; AAA79340." evidence="2" ref="1">
    <original>QMDMGEGEAVNA</original>
    <variation>HKDLGEAAAS</variation>
    <location>
        <begin position="271"/>
        <end position="282"/>
    </location>
</feature>
<accession>P0A1B1</accession>
<accession>Q56018</accession>
<evidence type="ECO:0000250" key="1"/>
<evidence type="ECO:0000305" key="2"/>
<gene>
    <name type="primary">apaH</name>
    <name type="ordered locus">STM0088</name>
</gene>
<name>APAH_SALTY</name>
<sequence length="282" mass="31431">MATYLIGDVHGCYDELIALLQQVEFTPDTDTLWLTGDLVARGPGSLDVLRYVKSLGNSVRLVLGNHDLHLLAVFAGISRNKPKDRLTPLLEAPDADELLNWLRRQPLLQVDEEKKLVMAHAGITPQWDLQTAKECARDVEAVLSSDSYPFFLDAMYGDMPNNWSPELSGLARLRFITNAFTRMRYCFPNGQLDMYSKASPENAPAPLKPWFAIPGPVSEAYSIAFGHWASLEGKGTPEGIYALDTGCCWGGELTCLRWEDKQYFVQPSNRQMDMGEGEAVNA</sequence>
<dbReference type="EC" id="3.6.1.41"/>
<dbReference type="EMBL" id="U24176">
    <property type="protein sequence ID" value="AAA79340.1"/>
    <property type="molecule type" value="Genomic_DNA"/>
</dbReference>
<dbReference type="EMBL" id="AE006468">
    <property type="protein sequence ID" value="AAL19052.1"/>
    <property type="molecule type" value="Genomic_DNA"/>
</dbReference>
<dbReference type="RefSeq" id="NP_459093.1">
    <property type="nucleotide sequence ID" value="NC_003197.2"/>
</dbReference>
<dbReference type="RefSeq" id="WP_000257211.1">
    <property type="nucleotide sequence ID" value="NC_003197.2"/>
</dbReference>
<dbReference type="SMR" id="P0A1B1"/>
<dbReference type="STRING" id="99287.STM0088"/>
<dbReference type="PaxDb" id="99287-STM0088"/>
<dbReference type="GeneID" id="1251606"/>
<dbReference type="KEGG" id="stm:STM0088"/>
<dbReference type="PATRIC" id="fig|99287.12.peg.91"/>
<dbReference type="HOGENOM" id="CLU_056184_2_0_6"/>
<dbReference type="OMA" id="INAFTRM"/>
<dbReference type="PhylomeDB" id="P0A1B1"/>
<dbReference type="BioCyc" id="SENT99287:STM0088-MONOMER"/>
<dbReference type="Proteomes" id="UP000001014">
    <property type="component" value="Chromosome"/>
</dbReference>
<dbReference type="GO" id="GO:0005737">
    <property type="term" value="C:cytoplasm"/>
    <property type="evidence" value="ECO:0000318"/>
    <property type="project" value="GO_Central"/>
</dbReference>
<dbReference type="GO" id="GO:0008803">
    <property type="term" value="F:bis(5'-nucleosyl)-tetraphosphatase (symmetrical) activity"/>
    <property type="evidence" value="ECO:0000318"/>
    <property type="project" value="GO_Central"/>
</dbReference>
<dbReference type="GO" id="GO:0016791">
    <property type="term" value="F:phosphatase activity"/>
    <property type="evidence" value="ECO:0000318"/>
    <property type="project" value="GO_Central"/>
</dbReference>
<dbReference type="GO" id="GO:0110154">
    <property type="term" value="P:RNA decapping"/>
    <property type="evidence" value="ECO:0000318"/>
    <property type="project" value="GO_Central"/>
</dbReference>
<dbReference type="CDD" id="cd07422">
    <property type="entry name" value="MPP_ApaH"/>
    <property type="match status" value="1"/>
</dbReference>
<dbReference type="FunFam" id="3.60.21.10:FF:000013">
    <property type="entry name" value="Bis(5'-nucleosyl)-tetraphosphatase, symmetrical"/>
    <property type="match status" value="1"/>
</dbReference>
<dbReference type="Gene3D" id="3.60.21.10">
    <property type="match status" value="1"/>
</dbReference>
<dbReference type="HAMAP" id="MF_00199">
    <property type="entry name" value="ApaH"/>
    <property type="match status" value="1"/>
</dbReference>
<dbReference type="InterPro" id="IPR004617">
    <property type="entry name" value="ApaH"/>
</dbReference>
<dbReference type="InterPro" id="IPR004843">
    <property type="entry name" value="Calcineurin-like_PHP_ApaH"/>
</dbReference>
<dbReference type="InterPro" id="IPR029052">
    <property type="entry name" value="Metallo-depent_PP-like"/>
</dbReference>
<dbReference type="NCBIfam" id="TIGR00668">
    <property type="entry name" value="apaH"/>
    <property type="match status" value="1"/>
</dbReference>
<dbReference type="NCBIfam" id="NF001204">
    <property type="entry name" value="PRK00166.1"/>
    <property type="match status" value="1"/>
</dbReference>
<dbReference type="PANTHER" id="PTHR40942">
    <property type="match status" value="1"/>
</dbReference>
<dbReference type="PANTHER" id="PTHR40942:SF4">
    <property type="entry name" value="CYTOCHROME C5"/>
    <property type="match status" value="1"/>
</dbReference>
<dbReference type="Pfam" id="PF00149">
    <property type="entry name" value="Metallophos"/>
    <property type="match status" value="1"/>
</dbReference>
<dbReference type="PIRSF" id="PIRSF000903">
    <property type="entry name" value="B5n-ttraPtase_sm"/>
    <property type="match status" value="1"/>
</dbReference>
<dbReference type="SUPFAM" id="SSF56300">
    <property type="entry name" value="Metallo-dependent phosphatases"/>
    <property type="match status" value="1"/>
</dbReference>
<proteinExistence type="inferred from homology"/>
<reference key="1">
    <citation type="submission" date="1995-10" db="EMBL/GenBank/DDBJ databases">
        <authorList>
            <person name="Smith R.L."/>
            <person name="Ahuja D."/>
            <person name="Maguire M.E."/>
        </authorList>
    </citation>
    <scope>NUCLEOTIDE SEQUENCE [GENOMIC DNA]</scope>
    <source>
        <strain>LT2</strain>
    </source>
</reference>
<reference key="2">
    <citation type="journal article" date="2001" name="Nature">
        <title>Complete genome sequence of Salmonella enterica serovar Typhimurium LT2.</title>
        <authorList>
            <person name="McClelland M."/>
            <person name="Sanderson K.E."/>
            <person name="Spieth J."/>
            <person name="Clifton S.W."/>
            <person name="Latreille P."/>
            <person name="Courtney L."/>
            <person name="Porwollik S."/>
            <person name="Ali J."/>
            <person name="Dante M."/>
            <person name="Du F."/>
            <person name="Hou S."/>
            <person name="Layman D."/>
            <person name="Leonard S."/>
            <person name="Nguyen C."/>
            <person name="Scott K."/>
            <person name="Holmes A."/>
            <person name="Grewal N."/>
            <person name="Mulvaney E."/>
            <person name="Ryan E."/>
            <person name="Sun H."/>
            <person name="Florea L."/>
            <person name="Miller W."/>
            <person name="Stoneking T."/>
            <person name="Nhan M."/>
            <person name="Waterston R."/>
            <person name="Wilson R.K."/>
        </authorList>
    </citation>
    <scope>NUCLEOTIDE SEQUENCE [LARGE SCALE GENOMIC DNA]</scope>
    <source>
        <strain>LT2 / SGSC1412 / ATCC 700720</strain>
    </source>
</reference>
<organism>
    <name type="scientific">Salmonella typhimurium (strain LT2 / SGSC1412 / ATCC 700720)</name>
    <dbReference type="NCBI Taxonomy" id="99287"/>
    <lineage>
        <taxon>Bacteria</taxon>
        <taxon>Pseudomonadati</taxon>
        <taxon>Pseudomonadota</taxon>
        <taxon>Gammaproteobacteria</taxon>
        <taxon>Enterobacterales</taxon>
        <taxon>Enterobacteriaceae</taxon>
        <taxon>Salmonella</taxon>
    </lineage>
</organism>
<protein>
    <recommendedName>
        <fullName>Bis(5'-nucleosyl)-tetraphosphatase, symmetrical</fullName>
        <ecNumber>3.6.1.41</ecNumber>
    </recommendedName>
    <alternativeName>
        <fullName>Ap4A hydrolase</fullName>
    </alternativeName>
    <alternativeName>
        <fullName>Diadenosine 5',5'''-P1,P4-tetraphosphate pyrophosphohydrolase</fullName>
    </alternativeName>
    <alternativeName>
        <fullName>Diadenosine tetraphosphatase</fullName>
    </alternativeName>
</protein>
<comment type="function">
    <text evidence="1">Hydrolyzes diadenosine 5',5'''-P1,P4-tetraphosphate to yield ADP.</text>
</comment>
<comment type="catalytic activity">
    <reaction>
        <text>P(1),P(4)-bis(5'-adenosyl) tetraphosphate + H2O = 2 ADP + 2 H(+)</text>
        <dbReference type="Rhea" id="RHEA:24252"/>
        <dbReference type="ChEBI" id="CHEBI:15377"/>
        <dbReference type="ChEBI" id="CHEBI:15378"/>
        <dbReference type="ChEBI" id="CHEBI:58141"/>
        <dbReference type="ChEBI" id="CHEBI:456216"/>
        <dbReference type="EC" id="3.6.1.41"/>
    </reaction>
</comment>
<comment type="similarity">
    <text evidence="2">Belongs to the Ap4A hydrolase family.</text>
</comment>
<keyword id="KW-0378">Hydrolase</keyword>
<keyword id="KW-1185">Reference proteome</keyword>